<comment type="function">
    <text evidence="1">Catalyzes the radical-mediated insertion of two sulfur atoms into the C-6 and C-8 positions of the octanoyl moiety bound to the lipoyl domains of lipoate-dependent enzymes, thereby converting the octanoylated domains into lipoylated derivatives.</text>
</comment>
<comment type="catalytic activity">
    <reaction evidence="1">
        <text>[[Fe-S] cluster scaffold protein carrying a second [4Fe-4S](2+) cluster] + N(6)-octanoyl-L-lysyl-[protein] + 2 oxidized [2Fe-2S]-[ferredoxin] + 2 S-adenosyl-L-methionine + 4 H(+) = [[Fe-S] cluster scaffold protein] + N(6)-[(R)-dihydrolipoyl]-L-lysyl-[protein] + 4 Fe(3+) + 2 hydrogen sulfide + 2 5'-deoxyadenosine + 2 L-methionine + 2 reduced [2Fe-2S]-[ferredoxin]</text>
        <dbReference type="Rhea" id="RHEA:16585"/>
        <dbReference type="Rhea" id="RHEA-COMP:9928"/>
        <dbReference type="Rhea" id="RHEA-COMP:10000"/>
        <dbReference type="Rhea" id="RHEA-COMP:10001"/>
        <dbReference type="Rhea" id="RHEA-COMP:10475"/>
        <dbReference type="Rhea" id="RHEA-COMP:14568"/>
        <dbReference type="Rhea" id="RHEA-COMP:14569"/>
        <dbReference type="ChEBI" id="CHEBI:15378"/>
        <dbReference type="ChEBI" id="CHEBI:17319"/>
        <dbReference type="ChEBI" id="CHEBI:29034"/>
        <dbReference type="ChEBI" id="CHEBI:29919"/>
        <dbReference type="ChEBI" id="CHEBI:33722"/>
        <dbReference type="ChEBI" id="CHEBI:33737"/>
        <dbReference type="ChEBI" id="CHEBI:33738"/>
        <dbReference type="ChEBI" id="CHEBI:57844"/>
        <dbReference type="ChEBI" id="CHEBI:59789"/>
        <dbReference type="ChEBI" id="CHEBI:78809"/>
        <dbReference type="ChEBI" id="CHEBI:83100"/>
        <dbReference type="EC" id="2.8.1.8"/>
    </reaction>
</comment>
<comment type="cofactor">
    <cofactor evidence="1">
        <name>[4Fe-4S] cluster</name>
        <dbReference type="ChEBI" id="CHEBI:49883"/>
    </cofactor>
    <text evidence="1">Binds 2 [4Fe-4S] clusters per subunit. One cluster is coordinated with 3 cysteines and an exchangeable S-adenosyl-L-methionine.</text>
</comment>
<comment type="pathway">
    <text evidence="1">Protein modification; protein lipoylation via endogenous pathway; protein N(6)-(lipoyl)lysine from octanoyl-[acyl-carrier-protein]: step 2/2.</text>
</comment>
<comment type="subcellular location">
    <subcellularLocation>
        <location evidence="1">Cytoplasm</location>
    </subcellularLocation>
</comment>
<comment type="similarity">
    <text evidence="1">Belongs to the radical SAM superfamily. Lipoyl synthase family.</text>
</comment>
<sequence>MDSTARKQRGADKTARIPIKIVPAERLKKPEWIRIRLGAGHEAERFNEIKASLREHKLHTVCEEASCPNIHECFGKGTATFMIMGDICTRRCPFCDVGHGRPEPLNANEPQELAATIGAMRLNYVVITSVDRDDLRDGGAQHFVDCIRETRAASPKTRIEVLVPDFRGRLDVALEIFDQAPPDVMNHNLETVPRLYKQARPGADYAYSLRLLKEFKARHPDVPTKSGLMVGLGETDDEILDVLRDLRAHDVEMLTIGQYLQPSTGHLPVLRYVHPDTFKMFETEALAMGFKNAACGPMVRSSYWADQQAYGAGVV</sequence>
<organism>
    <name type="scientific">Aromatoleum aromaticum (strain DSM 19018 / LMG 30748 / EbN1)</name>
    <name type="common">Azoarcus sp. (strain EbN1)</name>
    <dbReference type="NCBI Taxonomy" id="76114"/>
    <lineage>
        <taxon>Bacteria</taxon>
        <taxon>Pseudomonadati</taxon>
        <taxon>Pseudomonadota</taxon>
        <taxon>Betaproteobacteria</taxon>
        <taxon>Rhodocyclales</taxon>
        <taxon>Rhodocyclaceae</taxon>
        <taxon>Aromatoleum</taxon>
    </lineage>
</organism>
<protein>
    <recommendedName>
        <fullName evidence="1">Lipoyl synthase</fullName>
        <ecNumber evidence="1">2.8.1.8</ecNumber>
    </recommendedName>
    <alternativeName>
        <fullName evidence="1">Lip-syn</fullName>
        <shortName evidence="1">LS</shortName>
    </alternativeName>
    <alternativeName>
        <fullName evidence="1">Lipoate synthase</fullName>
    </alternativeName>
    <alternativeName>
        <fullName evidence="1">Lipoic acid synthase</fullName>
    </alternativeName>
    <alternativeName>
        <fullName evidence="1">Sulfur insertion protein LipA</fullName>
    </alternativeName>
</protein>
<reference key="1">
    <citation type="journal article" date="2005" name="Arch. Microbiol.">
        <title>The genome sequence of an anaerobic aromatic-degrading denitrifying bacterium, strain EbN1.</title>
        <authorList>
            <person name="Rabus R."/>
            <person name="Kube M."/>
            <person name="Heider J."/>
            <person name="Beck A."/>
            <person name="Heitmann K."/>
            <person name="Widdel F."/>
            <person name="Reinhardt R."/>
        </authorList>
    </citation>
    <scope>NUCLEOTIDE SEQUENCE [LARGE SCALE GENOMIC DNA]</scope>
    <source>
        <strain>DSM 19018 / LMG 30748 / EbN1</strain>
    </source>
</reference>
<feature type="chain" id="PRO_0000325230" description="Lipoyl synthase">
    <location>
        <begin position="1"/>
        <end position="315"/>
    </location>
</feature>
<feature type="domain" description="Radical SAM core" evidence="2">
    <location>
        <begin position="74"/>
        <end position="291"/>
    </location>
</feature>
<feature type="binding site" evidence="1">
    <location>
        <position position="62"/>
    </location>
    <ligand>
        <name>[4Fe-4S] cluster</name>
        <dbReference type="ChEBI" id="CHEBI:49883"/>
        <label>1</label>
    </ligand>
</feature>
<feature type="binding site" evidence="1">
    <location>
        <position position="67"/>
    </location>
    <ligand>
        <name>[4Fe-4S] cluster</name>
        <dbReference type="ChEBI" id="CHEBI:49883"/>
        <label>1</label>
    </ligand>
</feature>
<feature type="binding site" evidence="1">
    <location>
        <position position="73"/>
    </location>
    <ligand>
        <name>[4Fe-4S] cluster</name>
        <dbReference type="ChEBI" id="CHEBI:49883"/>
        <label>1</label>
    </ligand>
</feature>
<feature type="binding site" evidence="1">
    <location>
        <position position="88"/>
    </location>
    <ligand>
        <name>[4Fe-4S] cluster</name>
        <dbReference type="ChEBI" id="CHEBI:49883"/>
        <label>2</label>
        <note>4Fe-4S-S-AdoMet</note>
    </ligand>
</feature>
<feature type="binding site" evidence="1">
    <location>
        <position position="92"/>
    </location>
    <ligand>
        <name>[4Fe-4S] cluster</name>
        <dbReference type="ChEBI" id="CHEBI:49883"/>
        <label>2</label>
        <note>4Fe-4S-S-AdoMet</note>
    </ligand>
</feature>
<feature type="binding site" evidence="1">
    <location>
        <position position="95"/>
    </location>
    <ligand>
        <name>[4Fe-4S] cluster</name>
        <dbReference type="ChEBI" id="CHEBI:49883"/>
        <label>2</label>
        <note>4Fe-4S-S-AdoMet</note>
    </ligand>
</feature>
<feature type="binding site" evidence="1">
    <location>
        <position position="302"/>
    </location>
    <ligand>
        <name>[4Fe-4S] cluster</name>
        <dbReference type="ChEBI" id="CHEBI:49883"/>
        <label>1</label>
    </ligand>
</feature>
<gene>
    <name evidence="1" type="primary">lipA</name>
    <name type="ordered locus">AZOSEA17200</name>
    <name type="ORF">ebA3050</name>
</gene>
<keyword id="KW-0004">4Fe-4S</keyword>
<keyword id="KW-0963">Cytoplasm</keyword>
<keyword id="KW-0408">Iron</keyword>
<keyword id="KW-0411">Iron-sulfur</keyword>
<keyword id="KW-0479">Metal-binding</keyword>
<keyword id="KW-1185">Reference proteome</keyword>
<keyword id="KW-0949">S-adenosyl-L-methionine</keyword>
<keyword id="KW-0808">Transferase</keyword>
<proteinExistence type="inferred from homology"/>
<evidence type="ECO:0000255" key="1">
    <source>
        <dbReference type="HAMAP-Rule" id="MF_00206"/>
    </source>
</evidence>
<evidence type="ECO:0000255" key="2">
    <source>
        <dbReference type="PROSITE-ProRule" id="PRU01266"/>
    </source>
</evidence>
<accession>Q5P4B8</accession>
<name>LIPA_AROAE</name>
<dbReference type="EC" id="2.8.1.8" evidence="1"/>
<dbReference type="EMBL" id="CR555306">
    <property type="protein sequence ID" value="CAI07845.1"/>
    <property type="molecule type" value="Genomic_DNA"/>
</dbReference>
<dbReference type="RefSeq" id="WP_011237559.1">
    <property type="nucleotide sequence ID" value="NC_006513.1"/>
</dbReference>
<dbReference type="SMR" id="Q5P4B8"/>
<dbReference type="STRING" id="76114.ebA3050"/>
<dbReference type="KEGG" id="eba:ebA3050"/>
<dbReference type="eggNOG" id="COG0320">
    <property type="taxonomic scope" value="Bacteria"/>
</dbReference>
<dbReference type="HOGENOM" id="CLU_033144_2_1_4"/>
<dbReference type="OrthoDB" id="9787898at2"/>
<dbReference type="UniPathway" id="UPA00538">
    <property type="reaction ID" value="UER00593"/>
</dbReference>
<dbReference type="Proteomes" id="UP000006552">
    <property type="component" value="Chromosome"/>
</dbReference>
<dbReference type="GO" id="GO:0005737">
    <property type="term" value="C:cytoplasm"/>
    <property type="evidence" value="ECO:0007669"/>
    <property type="project" value="UniProtKB-SubCell"/>
</dbReference>
<dbReference type="GO" id="GO:0051539">
    <property type="term" value="F:4 iron, 4 sulfur cluster binding"/>
    <property type="evidence" value="ECO:0007669"/>
    <property type="project" value="UniProtKB-UniRule"/>
</dbReference>
<dbReference type="GO" id="GO:0016992">
    <property type="term" value="F:lipoate synthase activity"/>
    <property type="evidence" value="ECO:0007669"/>
    <property type="project" value="UniProtKB-UniRule"/>
</dbReference>
<dbReference type="GO" id="GO:0046872">
    <property type="term" value="F:metal ion binding"/>
    <property type="evidence" value="ECO:0007669"/>
    <property type="project" value="UniProtKB-KW"/>
</dbReference>
<dbReference type="CDD" id="cd01335">
    <property type="entry name" value="Radical_SAM"/>
    <property type="match status" value="1"/>
</dbReference>
<dbReference type="FunFam" id="3.20.20.70:FF:000023">
    <property type="entry name" value="Lipoyl synthase"/>
    <property type="match status" value="1"/>
</dbReference>
<dbReference type="Gene3D" id="3.20.20.70">
    <property type="entry name" value="Aldolase class I"/>
    <property type="match status" value="1"/>
</dbReference>
<dbReference type="HAMAP" id="MF_00206">
    <property type="entry name" value="Lipoyl_synth"/>
    <property type="match status" value="1"/>
</dbReference>
<dbReference type="InterPro" id="IPR013785">
    <property type="entry name" value="Aldolase_TIM"/>
</dbReference>
<dbReference type="InterPro" id="IPR006638">
    <property type="entry name" value="Elp3/MiaA/NifB-like_rSAM"/>
</dbReference>
<dbReference type="InterPro" id="IPR031691">
    <property type="entry name" value="LIAS_N"/>
</dbReference>
<dbReference type="InterPro" id="IPR003698">
    <property type="entry name" value="Lipoyl_synth"/>
</dbReference>
<dbReference type="InterPro" id="IPR007197">
    <property type="entry name" value="rSAM"/>
</dbReference>
<dbReference type="NCBIfam" id="TIGR00510">
    <property type="entry name" value="lipA"/>
    <property type="match status" value="1"/>
</dbReference>
<dbReference type="NCBIfam" id="NF004019">
    <property type="entry name" value="PRK05481.1"/>
    <property type="match status" value="1"/>
</dbReference>
<dbReference type="NCBIfam" id="NF009544">
    <property type="entry name" value="PRK12928.1"/>
    <property type="match status" value="1"/>
</dbReference>
<dbReference type="PANTHER" id="PTHR10949">
    <property type="entry name" value="LIPOYL SYNTHASE"/>
    <property type="match status" value="1"/>
</dbReference>
<dbReference type="PANTHER" id="PTHR10949:SF0">
    <property type="entry name" value="LIPOYL SYNTHASE, MITOCHONDRIAL"/>
    <property type="match status" value="1"/>
</dbReference>
<dbReference type="Pfam" id="PF16881">
    <property type="entry name" value="LIAS_N"/>
    <property type="match status" value="1"/>
</dbReference>
<dbReference type="Pfam" id="PF04055">
    <property type="entry name" value="Radical_SAM"/>
    <property type="match status" value="1"/>
</dbReference>
<dbReference type="PIRSF" id="PIRSF005963">
    <property type="entry name" value="Lipoyl_synth"/>
    <property type="match status" value="1"/>
</dbReference>
<dbReference type="SFLD" id="SFLDF00271">
    <property type="entry name" value="lipoyl_synthase"/>
    <property type="match status" value="1"/>
</dbReference>
<dbReference type="SFLD" id="SFLDS00029">
    <property type="entry name" value="Radical_SAM"/>
    <property type="match status" value="1"/>
</dbReference>
<dbReference type="SMART" id="SM00729">
    <property type="entry name" value="Elp3"/>
    <property type="match status" value="1"/>
</dbReference>
<dbReference type="SUPFAM" id="SSF102114">
    <property type="entry name" value="Radical SAM enzymes"/>
    <property type="match status" value="1"/>
</dbReference>
<dbReference type="PROSITE" id="PS51918">
    <property type="entry name" value="RADICAL_SAM"/>
    <property type="match status" value="1"/>
</dbReference>